<organism>
    <name type="scientific">Shewanella frigidimarina (strain NCIMB 400)</name>
    <dbReference type="NCBI Taxonomy" id="318167"/>
    <lineage>
        <taxon>Bacteria</taxon>
        <taxon>Pseudomonadati</taxon>
        <taxon>Pseudomonadota</taxon>
        <taxon>Gammaproteobacteria</taxon>
        <taxon>Alteromonadales</taxon>
        <taxon>Shewanellaceae</taxon>
        <taxon>Shewanella</taxon>
    </lineage>
</organism>
<dbReference type="EMBL" id="CP000447">
    <property type="protein sequence ID" value="ABI70579.1"/>
    <property type="molecule type" value="Genomic_DNA"/>
</dbReference>
<dbReference type="RefSeq" id="WP_011636204.1">
    <property type="nucleotide sequence ID" value="NC_008345.1"/>
</dbReference>
<dbReference type="SMR" id="Q087I6"/>
<dbReference type="STRING" id="318167.Sfri_0721"/>
<dbReference type="KEGG" id="sfr:Sfri_0721"/>
<dbReference type="eggNOG" id="COG3017">
    <property type="taxonomic scope" value="Bacteria"/>
</dbReference>
<dbReference type="HOGENOM" id="CLU_092816_1_0_6"/>
<dbReference type="OrthoDB" id="9797618at2"/>
<dbReference type="Proteomes" id="UP000000684">
    <property type="component" value="Chromosome"/>
</dbReference>
<dbReference type="GO" id="GO:0009279">
    <property type="term" value="C:cell outer membrane"/>
    <property type="evidence" value="ECO:0007669"/>
    <property type="project" value="UniProtKB-SubCell"/>
</dbReference>
<dbReference type="GO" id="GO:0044874">
    <property type="term" value="P:lipoprotein localization to outer membrane"/>
    <property type="evidence" value="ECO:0007669"/>
    <property type="project" value="UniProtKB-UniRule"/>
</dbReference>
<dbReference type="GO" id="GO:0015031">
    <property type="term" value="P:protein transport"/>
    <property type="evidence" value="ECO:0007669"/>
    <property type="project" value="UniProtKB-KW"/>
</dbReference>
<dbReference type="CDD" id="cd16326">
    <property type="entry name" value="LolB"/>
    <property type="match status" value="1"/>
</dbReference>
<dbReference type="Gene3D" id="2.50.20.10">
    <property type="entry name" value="Lipoprotein localisation LolA/LolB/LppX"/>
    <property type="match status" value="1"/>
</dbReference>
<dbReference type="HAMAP" id="MF_00233">
    <property type="entry name" value="LolB"/>
    <property type="match status" value="1"/>
</dbReference>
<dbReference type="InterPro" id="IPR029046">
    <property type="entry name" value="LolA/LolB/LppX"/>
</dbReference>
<dbReference type="InterPro" id="IPR004565">
    <property type="entry name" value="OM_lipoprot_LolB"/>
</dbReference>
<dbReference type="NCBIfam" id="TIGR00548">
    <property type="entry name" value="lolB"/>
    <property type="match status" value="1"/>
</dbReference>
<dbReference type="Pfam" id="PF03550">
    <property type="entry name" value="LolB"/>
    <property type="match status" value="1"/>
</dbReference>
<dbReference type="SUPFAM" id="SSF89392">
    <property type="entry name" value="Prokaryotic lipoproteins and lipoprotein localization factors"/>
    <property type="match status" value="1"/>
</dbReference>
<dbReference type="PROSITE" id="PS51257">
    <property type="entry name" value="PROKAR_LIPOPROTEIN"/>
    <property type="match status" value="1"/>
</dbReference>
<reference key="1">
    <citation type="submission" date="2006-08" db="EMBL/GenBank/DDBJ databases">
        <title>Complete sequence of Shewanella frigidimarina NCIMB 400.</title>
        <authorList>
            <consortium name="US DOE Joint Genome Institute"/>
            <person name="Copeland A."/>
            <person name="Lucas S."/>
            <person name="Lapidus A."/>
            <person name="Barry K."/>
            <person name="Detter J.C."/>
            <person name="Glavina del Rio T."/>
            <person name="Hammon N."/>
            <person name="Israni S."/>
            <person name="Dalin E."/>
            <person name="Tice H."/>
            <person name="Pitluck S."/>
            <person name="Fredrickson J.K."/>
            <person name="Kolker E."/>
            <person name="McCuel L.A."/>
            <person name="DiChristina T."/>
            <person name="Nealson K.H."/>
            <person name="Newman D."/>
            <person name="Tiedje J.M."/>
            <person name="Zhou J."/>
            <person name="Romine M.F."/>
            <person name="Culley D.E."/>
            <person name="Serres M."/>
            <person name="Chertkov O."/>
            <person name="Brettin T."/>
            <person name="Bruce D."/>
            <person name="Han C."/>
            <person name="Tapia R."/>
            <person name="Gilna P."/>
            <person name="Schmutz J."/>
            <person name="Larimer F."/>
            <person name="Land M."/>
            <person name="Hauser L."/>
            <person name="Kyrpides N."/>
            <person name="Mikhailova N."/>
            <person name="Richardson P."/>
        </authorList>
    </citation>
    <scope>NUCLEOTIDE SEQUENCE [LARGE SCALE GENOMIC DNA]</scope>
    <source>
        <strain>NCIMB 400</strain>
    </source>
</reference>
<name>LOLB_SHEFN</name>
<sequence>MRLSASLFHIALVTVLLVLAGCSVTPSEDFSPINVTNAAQAKAWELQGKIAVKTSEDKFSTNLYWLHQTKANDLRLTTVLGTTVLTLKTNQGMATLDVDGKTYRDSNAQDLLTGISGWSIPLDSLPLWITGQIGSNDKIVSYNPDGTIKQLISHDPEANWVVSFLGWQQQSGAQVPRLLKIEREDVQIKIQTNQWIAVAAKTK</sequence>
<feature type="signal peptide" evidence="1">
    <location>
        <begin position="1"/>
        <end position="21"/>
    </location>
</feature>
<feature type="chain" id="PRO_0000336618" description="Outer-membrane lipoprotein LolB">
    <location>
        <begin position="22"/>
        <end position="203"/>
    </location>
</feature>
<feature type="lipid moiety-binding region" description="N-palmitoyl cysteine" evidence="1">
    <location>
        <position position="22"/>
    </location>
</feature>
<feature type="lipid moiety-binding region" description="S-diacylglycerol cysteine" evidence="1">
    <location>
        <position position="22"/>
    </location>
</feature>
<proteinExistence type="inferred from homology"/>
<keyword id="KW-0998">Cell outer membrane</keyword>
<keyword id="KW-0143">Chaperone</keyword>
<keyword id="KW-0449">Lipoprotein</keyword>
<keyword id="KW-0472">Membrane</keyword>
<keyword id="KW-0564">Palmitate</keyword>
<keyword id="KW-0653">Protein transport</keyword>
<keyword id="KW-1185">Reference proteome</keyword>
<keyword id="KW-0732">Signal</keyword>
<keyword id="KW-0813">Transport</keyword>
<gene>
    <name evidence="1" type="primary">lolB</name>
    <name type="ordered locus">Sfri_0721</name>
</gene>
<protein>
    <recommendedName>
        <fullName evidence="1">Outer-membrane lipoprotein LolB</fullName>
    </recommendedName>
</protein>
<evidence type="ECO:0000255" key="1">
    <source>
        <dbReference type="HAMAP-Rule" id="MF_00233"/>
    </source>
</evidence>
<comment type="function">
    <text evidence="1">Plays a critical role in the incorporation of lipoproteins in the outer membrane after they are released by the LolA protein.</text>
</comment>
<comment type="subunit">
    <text evidence="1">Monomer.</text>
</comment>
<comment type="subcellular location">
    <subcellularLocation>
        <location evidence="1">Cell outer membrane</location>
        <topology evidence="1">Lipid-anchor</topology>
    </subcellularLocation>
</comment>
<comment type="similarity">
    <text evidence="1">Belongs to the LolB family.</text>
</comment>
<accession>Q087I6</accession>